<accession>O18740</accession>
<dbReference type="EMBL" id="AF000949">
    <property type="protein sequence ID" value="AAC26971.1"/>
    <property type="molecule type" value="Genomic_DNA"/>
</dbReference>
<dbReference type="SMR" id="O18740"/>
<dbReference type="FunCoup" id="O18740">
    <property type="interactions" value="2"/>
</dbReference>
<dbReference type="STRING" id="9615.ENSCAFP00000039054"/>
<dbReference type="PaxDb" id="9612-ENSCAFP00000023465"/>
<dbReference type="eggNOG" id="ENOG502QTM6">
    <property type="taxonomic scope" value="Eukaryota"/>
</dbReference>
<dbReference type="InParanoid" id="O18740"/>
<dbReference type="OrthoDB" id="2441647at2759"/>
<dbReference type="Proteomes" id="UP000002254">
    <property type="component" value="Unplaced"/>
</dbReference>
<dbReference type="Proteomes" id="UP000694429">
    <property type="component" value="Unplaced"/>
</dbReference>
<dbReference type="Proteomes" id="UP000694542">
    <property type="component" value="Unplaced"/>
</dbReference>
<dbReference type="Proteomes" id="UP000805418">
    <property type="component" value="Unplaced"/>
</dbReference>
<dbReference type="GO" id="GO:0005856">
    <property type="term" value="C:cytoskeleton"/>
    <property type="evidence" value="ECO:0000318"/>
    <property type="project" value="GO_Central"/>
</dbReference>
<dbReference type="GO" id="GO:0045095">
    <property type="term" value="C:keratin filament"/>
    <property type="evidence" value="ECO:0000318"/>
    <property type="project" value="GO_Central"/>
</dbReference>
<dbReference type="GO" id="GO:0005198">
    <property type="term" value="F:structural molecule activity"/>
    <property type="evidence" value="ECO:0007669"/>
    <property type="project" value="InterPro"/>
</dbReference>
<dbReference type="GO" id="GO:0030855">
    <property type="term" value="P:epithelial cell differentiation"/>
    <property type="evidence" value="ECO:0000318"/>
    <property type="project" value="GO_Central"/>
</dbReference>
<dbReference type="GO" id="GO:0045109">
    <property type="term" value="P:intermediate filament organization"/>
    <property type="evidence" value="ECO:0000250"/>
    <property type="project" value="UniProtKB"/>
</dbReference>
<dbReference type="GO" id="GO:0043588">
    <property type="term" value="P:skin development"/>
    <property type="evidence" value="ECO:0000250"/>
    <property type="project" value="UniProtKB"/>
</dbReference>
<dbReference type="FunFam" id="1.20.5.1160:FF:000002">
    <property type="entry name" value="Type I keratin 10"/>
    <property type="match status" value="1"/>
</dbReference>
<dbReference type="FunFam" id="1.20.5.170:FF:000002">
    <property type="entry name" value="Type I keratin KA11"/>
    <property type="match status" value="1"/>
</dbReference>
<dbReference type="FunFam" id="1.20.5.500:FF:000001">
    <property type="entry name" value="Type II keratin 23"/>
    <property type="match status" value="1"/>
</dbReference>
<dbReference type="Gene3D" id="1.20.5.170">
    <property type="match status" value="1"/>
</dbReference>
<dbReference type="Gene3D" id="1.20.5.500">
    <property type="entry name" value="Single helix bin"/>
    <property type="match status" value="1"/>
</dbReference>
<dbReference type="Gene3D" id="1.20.5.1160">
    <property type="entry name" value="Vasodilator-stimulated phosphoprotein"/>
    <property type="match status" value="1"/>
</dbReference>
<dbReference type="InterPro" id="IPR039008">
    <property type="entry name" value="IF_rod_dom"/>
</dbReference>
<dbReference type="InterPro" id="IPR002957">
    <property type="entry name" value="Keratin_I"/>
</dbReference>
<dbReference type="PANTHER" id="PTHR23239">
    <property type="entry name" value="INTERMEDIATE FILAMENT"/>
    <property type="match status" value="1"/>
</dbReference>
<dbReference type="PANTHER" id="PTHR23239:SF96">
    <property type="entry name" value="KERATIN, TYPE I CYTOSKELETAL 9"/>
    <property type="match status" value="1"/>
</dbReference>
<dbReference type="Pfam" id="PF00038">
    <property type="entry name" value="Filament"/>
    <property type="match status" value="1"/>
</dbReference>
<dbReference type="PRINTS" id="PR01248">
    <property type="entry name" value="TYPE1KERATIN"/>
</dbReference>
<dbReference type="SMART" id="SM01391">
    <property type="entry name" value="Filament"/>
    <property type="match status" value="1"/>
</dbReference>
<dbReference type="SUPFAM" id="SSF64593">
    <property type="entry name" value="Intermediate filament protein, coiled coil region"/>
    <property type="match status" value="2"/>
</dbReference>
<dbReference type="PROSITE" id="PS51842">
    <property type="entry name" value="IF_ROD_2"/>
    <property type="match status" value="1"/>
</dbReference>
<protein>
    <recommendedName>
        <fullName>Keratin, type I cytoskeletal 9</fullName>
    </recommendedName>
    <alternativeName>
        <fullName>Cytokeratin-9</fullName>
        <shortName>CK-9</shortName>
    </alternativeName>
    <alternativeName>
        <fullName>Keratin-9</fullName>
        <shortName>K9</shortName>
    </alternativeName>
</protein>
<organism>
    <name type="scientific">Canis lupus familiaris</name>
    <name type="common">Dog</name>
    <name type="synonym">Canis familiaris</name>
    <dbReference type="NCBI Taxonomy" id="9615"/>
    <lineage>
        <taxon>Eukaryota</taxon>
        <taxon>Metazoa</taxon>
        <taxon>Chordata</taxon>
        <taxon>Craniata</taxon>
        <taxon>Vertebrata</taxon>
        <taxon>Euteleostomi</taxon>
        <taxon>Mammalia</taxon>
        <taxon>Eutheria</taxon>
        <taxon>Laurasiatheria</taxon>
        <taxon>Carnivora</taxon>
        <taxon>Caniformia</taxon>
        <taxon>Canidae</taxon>
        <taxon>Canis</taxon>
    </lineage>
</organism>
<feature type="chain" id="PRO_0000308371" description="Keratin, type I cytoskeletal 9">
    <location>
        <begin position="1"/>
        <end position="786"/>
    </location>
</feature>
<feature type="domain" description="IF rod" evidence="4">
    <location>
        <begin position="137"/>
        <end position="449"/>
    </location>
</feature>
<feature type="region of interest" description="Head" evidence="3">
    <location>
        <begin position="1"/>
        <end position="136"/>
    </location>
</feature>
<feature type="region of interest" description="Disordered" evidence="5">
    <location>
        <begin position="1"/>
        <end position="21"/>
    </location>
</feature>
<feature type="region of interest" description="Coil 1A" evidence="3">
    <location>
        <begin position="137"/>
        <end position="172"/>
    </location>
</feature>
<feature type="region of interest" description="Linker 1" evidence="3">
    <location>
        <begin position="173"/>
        <end position="191"/>
    </location>
</feature>
<feature type="region of interest" description="Coil 1B" evidence="3">
    <location>
        <begin position="192"/>
        <end position="283"/>
    </location>
</feature>
<feature type="region of interest" description="Linker 12" evidence="3">
    <location>
        <begin position="284"/>
        <end position="306"/>
    </location>
</feature>
<feature type="region of interest" description="Coil 2" evidence="3">
    <location>
        <begin position="307"/>
        <end position="445"/>
    </location>
</feature>
<feature type="region of interest" description="Tail" evidence="3">
    <location>
        <begin position="446"/>
        <end position="760"/>
    </location>
</feature>
<feature type="region of interest" description="Disordered" evidence="5">
    <location>
        <begin position="447"/>
        <end position="786"/>
    </location>
</feature>
<feature type="compositionally biased region" description="Gly residues" evidence="5">
    <location>
        <begin position="460"/>
        <end position="657"/>
    </location>
</feature>
<feature type="compositionally biased region" description="Gly residues" evidence="5">
    <location>
        <begin position="664"/>
        <end position="761"/>
    </location>
</feature>
<feature type="compositionally biased region" description="Low complexity" evidence="5">
    <location>
        <begin position="762"/>
        <end position="773"/>
    </location>
</feature>
<feature type="modified residue" description="Phosphoserine" evidence="1">
    <location>
        <position position="52"/>
    </location>
</feature>
<feature type="sequence variant" evidence="6">
    <original>N</original>
    <variation>G</variation>
    <location>
        <position position="308"/>
    </location>
</feature>
<proteinExistence type="inferred from homology"/>
<evidence type="ECO:0000250" key="1">
    <source>
        <dbReference type="UniProtKB" id="P13645"/>
    </source>
</evidence>
<evidence type="ECO:0000250" key="2">
    <source>
        <dbReference type="UniProtKB" id="P35527"/>
    </source>
</evidence>
<evidence type="ECO:0000255" key="3"/>
<evidence type="ECO:0000255" key="4">
    <source>
        <dbReference type="PROSITE-ProRule" id="PRU01188"/>
    </source>
</evidence>
<evidence type="ECO:0000256" key="5">
    <source>
        <dbReference type="SAM" id="MobiDB-lite"/>
    </source>
</evidence>
<evidence type="ECO:0000269" key="6">
    <source>
    </source>
</evidence>
<evidence type="ECO:0000305" key="7"/>
<evidence type="ECO:0000312" key="8">
    <source>
        <dbReference type="EMBL" id="AAC26971.1"/>
    </source>
</evidence>
<reference evidence="7 8" key="1">
    <citation type="journal article" date="1998" name="Anim. Genet.">
        <title>Identification and analysis of the dog keratin 9 (KRT9) gene.</title>
        <authorList>
            <person name="Lachaume P."/>
            <person name="Hitte C."/>
            <person name="Jouquand S."/>
            <person name="Priat C."/>
            <person name="Galibert F."/>
        </authorList>
    </citation>
    <scope>NUCLEOTIDE SEQUENCE [GENOMIC DNA]</scope>
    <scope>VARIANT GLY-308</scope>
</reference>
<sequence>MNCRQFLSSHCSRDSSGGGGGSKMFSCNRSSFSGASGGGGRFSSSRSFGGGSSGACGRGGGGSFGSSYGGGSGGGFSAGSFGGHSRGFSGGSGGGFGGGFGGGFGGFSGGSGGGFGGPGGFGSGFDSGAGGILGADEKTTMQDLNSRLASYLDKVQALEDANKELESKIREWYDKQGSRTFHRDYSPYYDTIEDLKNQIVNITADNNKTLLDLDNTRMTLDDIRMKCDIENNLRLAVNADINGLRKVLDDLTMQKSDLEMHYESLQEELIALKKNHEDEMSQLTGQNSGDVNVEMNAAPGRDLTKILNDMREEYERISAKNRKDIEEQYETQMSQMEQEVMSSGQEMESNHKEVTQLRHSIQEMEIELQSQLSKKSALEKSLEDTKNHYCGQLQQLQEQIRSLEGQITEIRGEIECQNQEYSLLLNIKTRLEQEIKTYRSLLEGGQEDFESHESGQSHFGSGGSRQQGGIGGSHGRGSRGGSGGSYGGGSSSGGGSGGSHGGGSGGSYGGGSSSGGGSGGRGGSGGSYGGGSGSGGGSSGSYGGGSSSGGGSGGSHGGGSGGSYGGGSSSGGGSGGRGGSGGSYGGGSGSGGGRGGGCEEGSGSGGRSGGSYGGGSGSGGGSSCSYGGGSSSGGGSGGSYGGGSSSGGGSGGKGGSGCSYSGGSSSGGGSGGSYGGGSSSGRGSGGRGGSAGSYGGGSGSGGGRGGGCEEGSGSGGRSGGSYGGGSGSGGRSGGSYGGGSGSGGGSGGSYGGGSGSKGGSGRSSQVQSSSSKSGECDDTQGYHIQY</sequence>
<name>K1C9_CANLF</name>
<comment type="function">
    <text evidence="2">May serve an important special function either in the mature palmar and plantar skin tissue or in the morphogenetic program of the formation of these tissues. Plays a role in keratin filament assembly (By similarity).</text>
</comment>
<comment type="subunit">
    <text evidence="7">Heterotetramer of two type I and two type II keratins.</text>
</comment>
<comment type="miscellaneous">
    <text evidence="7">There are two types of cytoskeletal and microfibrillar keratin, I (acidic) and II (neutral to basic) (40-55 and 56-70 kDa, respectively).</text>
</comment>
<comment type="similarity">
    <text evidence="4">Belongs to the intermediate filament family.</text>
</comment>
<gene>
    <name evidence="8" type="primary">KRT9</name>
</gene>
<keyword id="KW-0175">Coiled coil</keyword>
<keyword id="KW-0403">Intermediate filament</keyword>
<keyword id="KW-0416">Keratin</keyword>
<keyword id="KW-0597">Phosphoprotein</keyword>
<keyword id="KW-1185">Reference proteome</keyword>